<organism>
    <name type="scientific">Acinetobacter baumannii (strain ACICU)</name>
    <dbReference type="NCBI Taxonomy" id="405416"/>
    <lineage>
        <taxon>Bacteria</taxon>
        <taxon>Pseudomonadati</taxon>
        <taxon>Pseudomonadota</taxon>
        <taxon>Gammaproteobacteria</taxon>
        <taxon>Moraxellales</taxon>
        <taxon>Moraxellaceae</taxon>
        <taxon>Acinetobacter</taxon>
        <taxon>Acinetobacter calcoaceticus/baumannii complex</taxon>
    </lineage>
</organism>
<comment type="function">
    <text evidence="1">Component of the acetyl coenzyme A carboxylase (ACC) complex. First, biotin carboxylase catalyzes the carboxylation of biotin on its carrier protein (BCCP) and then the CO(2) group is transferred by the carboxyltransferase to acetyl-CoA to form malonyl-CoA.</text>
</comment>
<comment type="catalytic activity">
    <reaction evidence="1">
        <text>N(6)-carboxybiotinyl-L-lysyl-[protein] + acetyl-CoA = N(6)-biotinyl-L-lysyl-[protein] + malonyl-CoA</text>
        <dbReference type="Rhea" id="RHEA:54728"/>
        <dbReference type="Rhea" id="RHEA-COMP:10505"/>
        <dbReference type="Rhea" id="RHEA-COMP:10506"/>
        <dbReference type="ChEBI" id="CHEBI:57288"/>
        <dbReference type="ChEBI" id="CHEBI:57384"/>
        <dbReference type="ChEBI" id="CHEBI:83144"/>
        <dbReference type="ChEBI" id="CHEBI:83145"/>
        <dbReference type="EC" id="2.1.3.15"/>
    </reaction>
</comment>
<comment type="pathway">
    <text evidence="1">Lipid metabolism; malonyl-CoA biosynthesis; malonyl-CoA from acetyl-CoA: step 1/1.</text>
</comment>
<comment type="subunit">
    <text evidence="1">Acetyl-CoA carboxylase is a heterohexamer composed of biotin carboxyl carrier protein (AccB), biotin carboxylase (AccC) and two subunits each of ACCase subunit alpha (AccA) and ACCase subunit beta (AccD).</text>
</comment>
<comment type="subcellular location">
    <subcellularLocation>
        <location evidence="1">Cytoplasm</location>
    </subcellularLocation>
</comment>
<comment type="similarity">
    <text evidence="1">Belongs to the AccA family.</text>
</comment>
<reference key="1">
    <citation type="journal article" date="2008" name="Antimicrob. Agents Chemother.">
        <title>Whole-genome pyrosequencing of an epidemic multidrug-resistant Acinetobacter baumannii strain belonging to the European clone II group.</title>
        <authorList>
            <person name="Iacono M."/>
            <person name="Villa L."/>
            <person name="Fortini D."/>
            <person name="Bordoni R."/>
            <person name="Imperi F."/>
            <person name="Bonnal R.J."/>
            <person name="Sicheritz-Ponten T."/>
            <person name="De Bellis G."/>
            <person name="Visca P."/>
            <person name="Cassone A."/>
            <person name="Carattoli A."/>
        </authorList>
    </citation>
    <scope>NUCLEOTIDE SEQUENCE [LARGE SCALE GENOMIC DNA]</scope>
    <source>
        <strain>ACICU</strain>
    </source>
</reference>
<name>ACCA_ACIBC</name>
<evidence type="ECO:0000255" key="1">
    <source>
        <dbReference type="HAMAP-Rule" id="MF_00823"/>
    </source>
</evidence>
<evidence type="ECO:0000255" key="2">
    <source>
        <dbReference type="PROSITE-ProRule" id="PRU01137"/>
    </source>
</evidence>
<keyword id="KW-0067">ATP-binding</keyword>
<keyword id="KW-0963">Cytoplasm</keyword>
<keyword id="KW-0275">Fatty acid biosynthesis</keyword>
<keyword id="KW-0276">Fatty acid metabolism</keyword>
<keyword id="KW-0444">Lipid biosynthesis</keyword>
<keyword id="KW-0443">Lipid metabolism</keyword>
<keyword id="KW-0547">Nucleotide-binding</keyword>
<keyword id="KW-0808">Transferase</keyword>
<accession>B2HTI7</accession>
<feature type="chain" id="PRO_1000148722" description="Acetyl-coenzyme A carboxylase carboxyl transferase subunit alpha">
    <location>
        <begin position="1"/>
        <end position="273"/>
    </location>
</feature>
<feature type="domain" description="CoA carboxyltransferase C-terminal" evidence="2">
    <location>
        <begin position="1"/>
        <end position="244"/>
    </location>
</feature>
<gene>
    <name evidence="1" type="primary">accA</name>
    <name type="ordered locus">ACICU_00612</name>
</gene>
<dbReference type="EC" id="2.1.3.15" evidence="1"/>
<dbReference type="EMBL" id="CP000863">
    <property type="protein sequence ID" value="ACC55924.1"/>
    <property type="molecule type" value="Genomic_DNA"/>
</dbReference>
<dbReference type="RefSeq" id="WP_000710404.1">
    <property type="nucleotide sequence ID" value="NZ_CP031380.1"/>
</dbReference>
<dbReference type="SMR" id="B2HTI7"/>
<dbReference type="KEGG" id="abc:ACICU_00612"/>
<dbReference type="HOGENOM" id="CLU_015486_0_2_6"/>
<dbReference type="UniPathway" id="UPA00655">
    <property type="reaction ID" value="UER00711"/>
</dbReference>
<dbReference type="Proteomes" id="UP000008839">
    <property type="component" value="Chromosome"/>
</dbReference>
<dbReference type="GO" id="GO:0009317">
    <property type="term" value="C:acetyl-CoA carboxylase complex"/>
    <property type="evidence" value="ECO:0007669"/>
    <property type="project" value="InterPro"/>
</dbReference>
<dbReference type="GO" id="GO:0003989">
    <property type="term" value="F:acetyl-CoA carboxylase activity"/>
    <property type="evidence" value="ECO:0007669"/>
    <property type="project" value="InterPro"/>
</dbReference>
<dbReference type="GO" id="GO:0005524">
    <property type="term" value="F:ATP binding"/>
    <property type="evidence" value="ECO:0007669"/>
    <property type="project" value="UniProtKB-KW"/>
</dbReference>
<dbReference type="GO" id="GO:0016743">
    <property type="term" value="F:carboxyl- or carbamoyltransferase activity"/>
    <property type="evidence" value="ECO:0007669"/>
    <property type="project" value="UniProtKB-UniRule"/>
</dbReference>
<dbReference type="GO" id="GO:0006633">
    <property type="term" value="P:fatty acid biosynthetic process"/>
    <property type="evidence" value="ECO:0007669"/>
    <property type="project" value="UniProtKB-KW"/>
</dbReference>
<dbReference type="GO" id="GO:2001295">
    <property type="term" value="P:malonyl-CoA biosynthetic process"/>
    <property type="evidence" value="ECO:0007669"/>
    <property type="project" value="UniProtKB-UniRule"/>
</dbReference>
<dbReference type="Gene3D" id="3.90.226.10">
    <property type="entry name" value="2-enoyl-CoA Hydratase, Chain A, domain 1"/>
    <property type="match status" value="1"/>
</dbReference>
<dbReference type="HAMAP" id="MF_00823">
    <property type="entry name" value="AcetylCoA_CT_alpha"/>
    <property type="match status" value="1"/>
</dbReference>
<dbReference type="InterPro" id="IPR001095">
    <property type="entry name" value="Acetyl_CoA_COase_a_su"/>
</dbReference>
<dbReference type="InterPro" id="IPR029045">
    <property type="entry name" value="ClpP/crotonase-like_dom_sf"/>
</dbReference>
<dbReference type="InterPro" id="IPR011763">
    <property type="entry name" value="COA_CT_C"/>
</dbReference>
<dbReference type="NCBIfam" id="TIGR00513">
    <property type="entry name" value="accA"/>
    <property type="match status" value="1"/>
</dbReference>
<dbReference type="NCBIfam" id="NF041504">
    <property type="entry name" value="AccA_sub"/>
    <property type="match status" value="1"/>
</dbReference>
<dbReference type="NCBIfam" id="NF004344">
    <property type="entry name" value="PRK05724.1"/>
    <property type="match status" value="1"/>
</dbReference>
<dbReference type="PANTHER" id="PTHR42853">
    <property type="entry name" value="ACETYL-COENZYME A CARBOXYLASE CARBOXYL TRANSFERASE SUBUNIT ALPHA"/>
    <property type="match status" value="1"/>
</dbReference>
<dbReference type="PANTHER" id="PTHR42853:SF3">
    <property type="entry name" value="ACETYL-COENZYME A CARBOXYLASE CARBOXYL TRANSFERASE SUBUNIT ALPHA, CHLOROPLASTIC"/>
    <property type="match status" value="1"/>
</dbReference>
<dbReference type="Pfam" id="PF03255">
    <property type="entry name" value="ACCA"/>
    <property type="match status" value="1"/>
</dbReference>
<dbReference type="PRINTS" id="PR01069">
    <property type="entry name" value="ACCCTRFRASEA"/>
</dbReference>
<dbReference type="SUPFAM" id="SSF52096">
    <property type="entry name" value="ClpP/crotonase"/>
    <property type="match status" value="1"/>
</dbReference>
<dbReference type="PROSITE" id="PS50989">
    <property type="entry name" value="COA_CT_CTER"/>
    <property type="match status" value="1"/>
</dbReference>
<protein>
    <recommendedName>
        <fullName evidence="1">Acetyl-coenzyme A carboxylase carboxyl transferase subunit alpha</fullName>
        <shortName evidence="1">ACCase subunit alpha</shortName>
        <shortName evidence="1">Acetyl-CoA carboxylase carboxyltransferase subunit alpha</shortName>
        <ecNumber evidence="1">2.1.3.15</ecNumber>
    </recommendedName>
</protein>
<proteinExistence type="inferred from homology"/>
<sequence>MKKATQSKAWTTVQIARHPERPQFLDYVGEIFTEFDALHGDRLFGDDGAMVGGLARFDGQPVMVIGQHRGRSTREKLKHNFGMCNPEGYRKSQRLLDMAERFNLPVFTFIDTMGAYPGVGAEERGQAEAIATSLAQLSSLKVPVIATVLGEGGSGGALGIGVADRVIMLSHSIYSVISPEGCASILWKTAEKAAQASEALGLTADKLQSLGIVEYVVDEGEGAHLDPERVMQNLKVVLKQALDELLPMDANERCEARYQRLMKFGSENLGVAS</sequence>